<dbReference type="EC" id="3.1.-.-" evidence="1"/>
<dbReference type="EMBL" id="AE017220">
    <property type="protein sequence ID" value="AAX68285.1"/>
    <property type="molecule type" value="Genomic_DNA"/>
</dbReference>
<dbReference type="RefSeq" id="WP_001541462.1">
    <property type="nucleotide sequence ID" value="NC_006905.1"/>
</dbReference>
<dbReference type="SMR" id="Q57G77"/>
<dbReference type="KEGG" id="sec:SCH_4379"/>
<dbReference type="HOGENOM" id="CLU_151239_0_0_6"/>
<dbReference type="Proteomes" id="UP000000538">
    <property type="component" value="Chromosome"/>
</dbReference>
<dbReference type="GO" id="GO:0005737">
    <property type="term" value="C:cytoplasm"/>
    <property type="evidence" value="ECO:0007669"/>
    <property type="project" value="UniProtKB-SubCell"/>
</dbReference>
<dbReference type="GO" id="GO:0003677">
    <property type="term" value="F:DNA binding"/>
    <property type="evidence" value="ECO:0007669"/>
    <property type="project" value="UniProtKB-KW"/>
</dbReference>
<dbReference type="GO" id="GO:0003723">
    <property type="term" value="F:RNA binding"/>
    <property type="evidence" value="ECO:0007669"/>
    <property type="project" value="UniProtKB-KW"/>
</dbReference>
<dbReference type="GO" id="GO:0004521">
    <property type="term" value="F:RNA endonuclease activity"/>
    <property type="evidence" value="ECO:0007669"/>
    <property type="project" value="UniProtKB-UniRule"/>
</dbReference>
<dbReference type="GO" id="GO:0016070">
    <property type="term" value="P:RNA metabolic process"/>
    <property type="evidence" value="ECO:0007669"/>
    <property type="project" value="InterPro"/>
</dbReference>
<dbReference type="HAMAP" id="MF_01193">
    <property type="entry name" value="Endoribonucl_SymE"/>
    <property type="match status" value="1"/>
</dbReference>
<dbReference type="InterPro" id="IPR007159">
    <property type="entry name" value="SpoVT-AbrB_dom"/>
</dbReference>
<dbReference type="InterPro" id="IPR014944">
    <property type="entry name" value="Toxin_SymE-like"/>
</dbReference>
<dbReference type="InterPro" id="IPR020883">
    <property type="entry name" value="TypeI_TA_SymE"/>
</dbReference>
<dbReference type="NCBIfam" id="NF010128">
    <property type="entry name" value="PRK13605.1"/>
    <property type="match status" value="1"/>
</dbReference>
<dbReference type="Pfam" id="PF08845">
    <property type="entry name" value="SymE_toxin"/>
    <property type="match status" value="1"/>
</dbReference>
<dbReference type="PROSITE" id="PS51740">
    <property type="entry name" value="SPOVT_ABRB"/>
    <property type="match status" value="1"/>
</dbReference>
<reference key="1">
    <citation type="journal article" date="2005" name="Nucleic Acids Res.">
        <title>The genome sequence of Salmonella enterica serovar Choleraesuis, a highly invasive and resistant zoonotic pathogen.</title>
        <authorList>
            <person name="Chiu C.-H."/>
            <person name="Tang P."/>
            <person name="Chu C."/>
            <person name="Hu S."/>
            <person name="Bao Q."/>
            <person name="Yu J."/>
            <person name="Chou Y.-Y."/>
            <person name="Wang H.-S."/>
            <person name="Lee Y.-S."/>
        </authorList>
    </citation>
    <scope>NUCLEOTIDE SEQUENCE [LARGE SCALE GENOMIC DNA]</scope>
    <source>
        <strain>SC-B67</strain>
    </source>
</reference>
<evidence type="ECO:0000255" key="1">
    <source>
        <dbReference type="HAMAP-Rule" id="MF_01193"/>
    </source>
</evidence>
<evidence type="ECO:0000255" key="2">
    <source>
        <dbReference type="PROSITE-ProRule" id="PRU01076"/>
    </source>
</evidence>
<feature type="chain" id="PRO_0000297823" description="Endoribonuclease SymE">
    <location>
        <begin position="1"/>
        <end position="110"/>
    </location>
</feature>
<feature type="domain" description="SpoVT-AbrB" evidence="2">
    <location>
        <begin position="29"/>
        <end position="74"/>
    </location>
</feature>
<sequence>MTTPHSIAESTDPEVFPANNRHLTVSYASSYPEYTRIPAITLKGQWLEDAGFTTGTQVDVRVMNGCIVLTAQQPQPEESELMQSLRQVSKLSARKQKQVQAFIDVMAGSK</sequence>
<gene>
    <name evidence="1" type="primary">symE</name>
    <name type="ordered locus">SCH_4379</name>
</gene>
<accession>Q57G77</accession>
<comment type="function">
    <text evidence="1">Involved in the degradation and recycling of damaged RNA. It is itself a target for degradation by the ATP-dependent protease Lon.</text>
</comment>
<comment type="subcellular location">
    <subcellularLocation>
        <location evidence="1">Cytoplasm</location>
    </subcellularLocation>
</comment>
<comment type="similarity">
    <text evidence="1">Belongs to the SymE family.</text>
</comment>
<keyword id="KW-0963">Cytoplasm</keyword>
<keyword id="KW-0238">DNA-binding</keyword>
<keyword id="KW-0255">Endonuclease</keyword>
<keyword id="KW-0378">Hydrolase</keyword>
<keyword id="KW-0540">Nuclease</keyword>
<keyword id="KW-0694">RNA-binding</keyword>
<organism>
    <name type="scientific">Salmonella choleraesuis (strain SC-B67)</name>
    <dbReference type="NCBI Taxonomy" id="321314"/>
    <lineage>
        <taxon>Bacteria</taxon>
        <taxon>Pseudomonadati</taxon>
        <taxon>Pseudomonadota</taxon>
        <taxon>Gammaproteobacteria</taxon>
        <taxon>Enterobacterales</taxon>
        <taxon>Enterobacteriaceae</taxon>
        <taxon>Salmonella</taxon>
    </lineage>
</organism>
<proteinExistence type="inferred from homology"/>
<protein>
    <recommendedName>
        <fullName evidence="1">Endoribonuclease SymE</fullName>
        <ecNumber evidence="1">3.1.-.-</ecNumber>
    </recommendedName>
</protein>
<name>SYME_SALCH</name>